<name>SYF2_RAT</name>
<organism>
    <name type="scientific">Rattus norvegicus</name>
    <name type="common">Rat</name>
    <dbReference type="NCBI Taxonomy" id="10116"/>
    <lineage>
        <taxon>Eukaryota</taxon>
        <taxon>Metazoa</taxon>
        <taxon>Chordata</taxon>
        <taxon>Craniata</taxon>
        <taxon>Vertebrata</taxon>
        <taxon>Euteleostomi</taxon>
        <taxon>Mammalia</taxon>
        <taxon>Eutheria</taxon>
        <taxon>Euarchontoglires</taxon>
        <taxon>Glires</taxon>
        <taxon>Rodentia</taxon>
        <taxon>Myomorpha</taxon>
        <taxon>Muroidea</taxon>
        <taxon>Muridae</taxon>
        <taxon>Murinae</taxon>
        <taxon>Rattus</taxon>
    </lineage>
</organism>
<protein>
    <recommendedName>
        <fullName>Pre-mRNA-splicing factor SYF2</fullName>
    </recommendedName>
</protein>
<evidence type="ECO:0000250" key="1">
    <source>
        <dbReference type="UniProtKB" id="O95926"/>
    </source>
</evidence>
<evidence type="ECO:0000255" key="2"/>
<evidence type="ECO:0000305" key="3"/>
<reference key="1">
    <citation type="journal article" date="2002" name="Exp. Dermatol.">
        <title>Genes that are differentially expressed in rat vibrissa follicle germinative epithelium in vivo show altered expression patterns after extended organ culture.</title>
        <authorList>
            <person name="Whitehouse C.J."/>
            <person name="Huckle J.W."/>
            <person name="Demarchez M."/>
            <person name="Reynolds A.J."/>
            <person name="Jahoda C.A.B."/>
        </authorList>
    </citation>
    <scope>NUCLEOTIDE SEQUENCE [MRNA]</scope>
    <source>
        <strain>PVG</strain>
        <tissue>Hair follicle</tissue>
    </source>
</reference>
<reference key="2">
    <citation type="journal article" date="2004" name="Genome Res.">
        <title>The status, quality, and expansion of the NIH full-length cDNA project: the Mammalian Gene Collection (MGC).</title>
        <authorList>
            <consortium name="The MGC Project Team"/>
        </authorList>
    </citation>
    <scope>NUCLEOTIDE SEQUENCE [LARGE SCALE MRNA]</scope>
    <source>
        <tissue>Placenta</tissue>
    </source>
</reference>
<proteinExistence type="evidence at transcript level"/>
<keyword id="KW-0007">Acetylation</keyword>
<keyword id="KW-0175">Coiled coil</keyword>
<keyword id="KW-1017">Isopeptide bond</keyword>
<keyword id="KW-0507">mRNA processing</keyword>
<keyword id="KW-0508">mRNA splicing</keyword>
<keyword id="KW-0539">Nucleus</keyword>
<keyword id="KW-1185">Reference proteome</keyword>
<keyword id="KW-0747">Spliceosome</keyword>
<keyword id="KW-0832">Ubl conjugation</keyword>
<feature type="initiator methionine" description="Removed" evidence="1">
    <location>
        <position position="1"/>
    </location>
</feature>
<feature type="chain" id="PRO_0000250378" description="Pre-mRNA-splicing factor SYF2">
    <location>
        <begin position="2"/>
        <end position="242"/>
    </location>
</feature>
<feature type="coiled-coil region" evidence="2">
    <location>
        <begin position="65"/>
        <end position="91"/>
    </location>
</feature>
<feature type="modified residue" description="N-acetylalanine" evidence="1">
    <location>
        <position position="2"/>
    </location>
</feature>
<feature type="cross-link" description="Glycyl lysine isopeptide (Lys-Gly) (interchain with G-Cter in SUMO2)" evidence="1">
    <location>
        <position position="142"/>
    </location>
</feature>
<feature type="cross-link" description="Glycyl lysine isopeptide (Lys-Gly) (interchain with G-Cter in SUMO2)" evidence="1">
    <location>
        <position position="233"/>
    </location>
</feature>
<feature type="sequence conflict" description="In Ref. 1; AAK53393." evidence="3" ref="1">
    <original>A</original>
    <variation>S</variation>
    <location>
        <position position="11"/>
    </location>
</feature>
<feature type="sequence conflict" description="In Ref. 1; AAK53393." evidence="3" ref="1">
    <original>S</original>
    <variation>F</variation>
    <location>
        <position position="174"/>
    </location>
</feature>
<dbReference type="EMBL" id="AF366369">
    <property type="protein sequence ID" value="AAK53393.1"/>
    <property type="molecule type" value="mRNA"/>
</dbReference>
<dbReference type="EMBL" id="BC097289">
    <property type="protein sequence ID" value="AAH97289.1"/>
    <property type="molecule type" value="mRNA"/>
</dbReference>
<dbReference type="RefSeq" id="NP_596908.2">
    <property type="nucleotide sequence ID" value="NM_133417.2"/>
</dbReference>
<dbReference type="SMR" id="Q4QRB2"/>
<dbReference type="BioGRID" id="251040">
    <property type="interactions" value="1"/>
</dbReference>
<dbReference type="FunCoup" id="Q4QRB2">
    <property type="interactions" value="2538"/>
</dbReference>
<dbReference type="IntAct" id="Q4QRB2">
    <property type="interactions" value="1"/>
</dbReference>
<dbReference type="STRING" id="10116.ENSRNOP00000072888"/>
<dbReference type="iPTMnet" id="Q4QRB2"/>
<dbReference type="PhosphoSitePlus" id="Q4QRB2"/>
<dbReference type="PaxDb" id="10116-ENSRNOP00000024271"/>
<dbReference type="Ensembl" id="ENSRNOT00000091494.2">
    <property type="protein sequence ID" value="ENSRNOP00000072888.1"/>
    <property type="gene ID" value="ENSRNOG00000060597.2"/>
</dbReference>
<dbReference type="GeneID" id="170933"/>
<dbReference type="KEGG" id="rno:170933"/>
<dbReference type="UCSC" id="RGD:621592">
    <property type="organism name" value="rat"/>
</dbReference>
<dbReference type="AGR" id="RGD:621592"/>
<dbReference type="CTD" id="25949"/>
<dbReference type="RGD" id="621592">
    <property type="gene designation" value="Syf2"/>
</dbReference>
<dbReference type="eggNOG" id="KOG2609">
    <property type="taxonomic scope" value="Eukaryota"/>
</dbReference>
<dbReference type="GeneTree" id="ENSGT00390000017845"/>
<dbReference type="HOGENOM" id="CLU_051065_3_0_1"/>
<dbReference type="InParanoid" id="Q4QRB2"/>
<dbReference type="OMA" id="RRRMHND"/>
<dbReference type="OrthoDB" id="199717at2759"/>
<dbReference type="PhylomeDB" id="Q4QRB2"/>
<dbReference type="TreeFam" id="TF313041"/>
<dbReference type="Reactome" id="R-RNO-72163">
    <property type="pathway name" value="mRNA Splicing - Major Pathway"/>
</dbReference>
<dbReference type="PRO" id="PR:Q4QRB2"/>
<dbReference type="Proteomes" id="UP000002494">
    <property type="component" value="Chromosome 5"/>
</dbReference>
<dbReference type="Bgee" id="ENSRNOG00000060597">
    <property type="expression patterns" value="Expressed in thymus and 20 other cell types or tissues"/>
</dbReference>
<dbReference type="GO" id="GO:0071013">
    <property type="term" value="C:catalytic step 2 spliceosome"/>
    <property type="evidence" value="ECO:0000266"/>
    <property type="project" value="RGD"/>
</dbReference>
<dbReference type="GO" id="GO:0016607">
    <property type="term" value="C:nuclear speck"/>
    <property type="evidence" value="ECO:0007669"/>
    <property type="project" value="Ensembl"/>
</dbReference>
<dbReference type="GO" id="GO:0005634">
    <property type="term" value="C:nucleus"/>
    <property type="evidence" value="ECO:0000266"/>
    <property type="project" value="RGD"/>
</dbReference>
<dbReference type="GO" id="GO:0071014">
    <property type="term" value="C:post-mRNA release spliceosomal complex"/>
    <property type="evidence" value="ECO:0000318"/>
    <property type="project" value="GO_Central"/>
</dbReference>
<dbReference type="GO" id="GO:0000974">
    <property type="term" value="C:Prp19 complex"/>
    <property type="evidence" value="ECO:0000318"/>
    <property type="project" value="GO_Central"/>
</dbReference>
<dbReference type="GO" id="GO:0071007">
    <property type="term" value="C:U2-type catalytic step 2 spliceosome"/>
    <property type="evidence" value="ECO:0000250"/>
    <property type="project" value="UniProtKB"/>
</dbReference>
<dbReference type="GO" id="GO:0048568">
    <property type="term" value="P:embryonic organ development"/>
    <property type="evidence" value="ECO:0000266"/>
    <property type="project" value="RGD"/>
</dbReference>
<dbReference type="GO" id="GO:0007369">
    <property type="term" value="P:gastrulation"/>
    <property type="evidence" value="ECO:0000266"/>
    <property type="project" value="RGD"/>
</dbReference>
<dbReference type="GO" id="GO:0001701">
    <property type="term" value="P:in utero embryonic development"/>
    <property type="evidence" value="ECO:0000266"/>
    <property type="project" value="RGD"/>
</dbReference>
<dbReference type="GO" id="GO:0007095">
    <property type="term" value="P:mitotic G2 DNA damage checkpoint signaling"/>
    <property type="evidence" value="ECO:0000266"/>
    <property type="project" value="RGD"/>
</dbReference>
<dbReference type="GO" id="GO:0000398">
    <property type="term" value="P:mRNA splicing, via spliceosome"/>
    <property type="evidence" value="ECO:0000250"/>
    <property type="project" value="UniProtKB"/>
</dbReference>
<dbReference type="GO" id="GO:0008284">
    <property type="term" value="P:positive regulation of cell population proliferation"/>
    <property type="evidence" value="ECO:0000315"/>
    <property type="project" value="RGD"/>
</dbReference>
<dbReference type="InterPro" id="IPR013260">
    <property type="entry name" value="mRNA_splic_SYF2"/>
</dbReference>
<dbReference type="PANTHER" id="PTHR13264">
    <property type="entry name" value="GCIP-INTERACTING PROTEIN P29"/>
    <property type="match status" value="1"/>
</dbReference>
<dbReference type="PANTHER" id="PTHR13264:SF5">
    <property type="entry name" value="PRE-MRNA-SPLICING FACTOR SYF2"/>
    <property type="match status" value="1"/>
</dbReference>
<dbReference type="Pfam" id="PF08231">
    <property type="entry name" value="SYF2"/>
    <property type="match status" value="1"/>
</dbReference>
<comment type="function">
    <text evidence="1">Involved in pre-mRNA splicing as component of the spliceosome.</text>
</comment>
<comment type="subunit">
    <text evidence="1">Identified in the spliceosome C complex. Interacts with CCNDBP1.</text>
</comment>
<comment type="subcellular location">
    <subcellularLocation>
        <location evidence="1">Nucleus</location>
    </subcellularLocation>
</comment>
<comment type="similarity">
    <text evidence="3">Belongs to the SYF2 family.</text>
</comment>
<gene>
    <name type="primary">Syf2</name>
</gene>
<accession>Q4QRB2</accession>
<accession>Q91Y33</accession>
<sequence>MAAVTEVVVPADGAEARPLAAEELAAQKREQRLRKFRELHLKRNEARKLNHQEVVEEDKRLKLPANWEAKKARLEWELQEEEKKKECAARGEDYEKVKLLEISAEDAERWERRKKKKNPDLGFSDYAAAQLRQYHRLTKQIKPDMESYERQREKHGEDFFPTSNSLLHGTHVPSSEEIDRMVLDLEKQIEKRDKYSRRRPYNDDADIDYINERNAKFNKKAERFYGKYTAEIKQNLERGTAV</sequence>